<reference evidence="4" key="1">
    <citation type="journal article" date="2005" name="Science">
        <title>The transcriptional landscape of the mammalian genome.</title>
        <authorList>
            <person name="Carninci P."/>
            <person name="Kasukawa T."/>
            <person name="Katayama S."/>
            <person name="Gough J."/>
            <person name="Frith M.C."/>
            <person name="Maeda N."/>
            <person name="Oyama R."/>
            <person name="Ravasi T."/>
            <person name="Lenhard B."/>
            <person name="Wells C."/>
            <person name="Kodzius R."/>
            <person name="Shimokawa K."/>
            <person name="Bajic V.B."/>
            <person name="Brenner S.E."/>
            <person name="Batalov S."/>
            <person name="Forrest A.R."/>
            <person name="Zavolan M."/>
            <person name="Davis M.J."/>
            <person name="Wilming L.G."/>
            <person name="Aidinis V."/>
            <person name="Allen J.E."/>
            <person name="Ambesi-Impiombato A."/>
            <person name="Apweiler R."/>
            <person name="Aturaliya R.N."/>
            <person name="Bailey T.L."/>
            <person name="Bansal M."/>
            <person name="Baxter L."/>
            <person name="Beisel K.W."/>
            <person name="Bersano T."/>
            <person name="Bono H."/>
            <person name="Chalk A.M."/>
            <person name="Chiu K.P."/>
            <person name="Choudhary V."/>
            <person name="Christoffels A."/>
            <person name="Clutterbuck D.R."/>
            <person name="Crowe M.L."/>
            <person name="Dalla E."/>
            <person name="Dalrymple B.P."/>
            <person name="de Bono B."/>
            <person name="Della Gatta G."/>
            <person name="di Bernardo D."/>
            <person name="Down T."/>
            <person name="Engstrom P."/>
            <person name="Fagiolini M."/>
            <person name="Faulkner G."/>
            <person name="Fletcher C.F."/>
            <person name="Fukushima T."/>
            <person name="Furuno M."/>
            <person name="Futaki S."/>
            <person name="Gariboldi M."/>
            <person name="Georgii-Hemming P."/>
            <person name="Gingeras T.R."/>
            <person name="Gojobori T."/>
            <person name="Green R.E."/>
            <person name="Gustincich S."/>
            <person name="Harbers M."/>
            <person name="Hayashi Y."/>
            <person name="Hensch T.K."/>
            <person name="Hirokawa N."/>
            <person name="Hill D."/>
            <person name="Huminiecki L."/>
            <person name="Iacono M."/>
            <person name="Ikeo K."/>
            <person name="Iwama A."/>
            <person name="Ishikawa T."/>
            <person name="Jakt M."/>
            <person name="Kanapin A."/>
            <person name="Katoh M."/>
            <person name="Kawasawa Y."/>
            <person name="Kelso J."/>
            <person name="Kitamura H."/>
            <person name="Kitano H."/>
            <person name="Kollias G."/>
            <person name="Krishnan S.P."/>
            <person name="Kruger A."/>
            <person name="Kummerfeld S.K."/>
            <person name="Kurochkin I.V."/>
            <person name="Lareau L.F."/>
            <person name="Lazarevic D."/>
            <person name="Lipovich L."/>
            <person name="Liu J."/>
            <person name="Liuni S."/>
            <person name="McWilliam S."/>
            <person name="Madan Babu M."/>
            <person name="Madera M."/>
            <person name="Marchionni L."/>
            <person name="Matsuda H."/>
            <person name="Matsuzawa S."/>
            <person name="Miki H."/>
            <person name="Mignone F."/>
            <person name="Miyake S."/>
            <person name="Morris K."/>
            <person name="Mottagui-Tabar S."/>
            <person name="Mulder N."/>
            <person name="Nakano N."/>
            <person name="Nakauchi H."/>
            <person name="Ng P."/>
            <person name="Nilsson R."/>
            <person name="Nishiguchi S."/>
            <person name="Nishikawa S."/>
            <person name="Nori F."/>
            <person name="Ohara O."/>
            <person name="Okazaki Y."/>
            <person name="Orlando V."/>
            <person name="Pang K.C."/>
            <person name="Pavan W.J."/>
            <person name="Pavesi G."/>
            <person name="Pesole G."/>
            <person name="Petrovsky N."/>
            <person name="Piazza S."/>
            <person name="Reed J."/>
            <person name="Reid J.F."/>
            <person name="Ring B.Z."/>
            <person name="Ringwald M."/>
            <person name="Rost B."/>
            <person name="Ruan Y."/>
            <person name="Salzberg S.L."/>
            <person name="Sandelin A."/>
            <person name="Schneider C."/>
            <person name="Schoenbach C."/>
            <person name="Sekiguchi K."/>
            <person name="Semple C.A."/>
            <person name="Seno S."/>
            <person name="Sessa L."/>
            <person name="Sheng Y."/>
            <person name="Shibata Y."/>
            <person name="Shimada H."/>
            <person name="Shimada K."/>
            <person name="Silva D."/>
            <person name="Sinclair B."/>
            <person name="Sperling S."/>
            <person name="Stupka E."/>
            <person name="Sugiura K."/>
            <person name="Sultana R."/>
            <person name="Takenaka Y."/>
            <person name="Taki K."/>
            <person name="Tammoja K."/>
            <person name="Tan S.L."/>
            <person name="Tang S."/>
            <person name="Taylor M.S."/>
            <person name="Tegner J."/>
            <person name="Teichmann S.A."/>
            <person name="Ueda H.R."/>
            <person name="van Nimwegen E."/>
            <person name="Verardo R."/>
            <person name="Wei C.L."/>
            <person name="Yagi K."/>
            <person name="Yamanishi H."/>
            <person name="Zabarovsky E."/>
            <person name="Zhu S."/>
            <person name="Zimmer A."/>
            <person name="Hide W."/>
            <person name="Bult C."/>
            <person name="Grimmond S.M."/>
            <person name="Teasdale R.D."/>
            <person name="Liu E.T."/>
            <person name="Brusic V."/>
            <person name="Quackenbush J."/>
            <person name="Wahlestedt C."/>
            <person name="Mattick J.S."/>
            <person name="Hume D.A."/>
            <person name="Kai C."/>
            <person name="Sasaki D."/>
            <person name="Tomaru Y."/>
            <person name="Fukuda S."/>
            <person name="Kanamori-Katayama M."/>
            <person name="Suzuki M."/>
            <person name="Aoki J."/>
            <person name="Arakawa T."/>
            <person name="Iida J."/>
            <person name="Imamura K."/>
            <person name="Itoh M."/>
            <person name="Kato T."/>
            <person name="Kawaji H."/>
            <person name="Kawagashira N."/>
            <person name="Kawashima T."/>
            <person name="Kojima M."/>
            <person name="Kondo S."/>
            <person name="Konno H."/>
            <person name="Nakano K."/>
            <person name="Ninomiya N."/>
            <person name="Nishio T."/>
            <person name="Okada M."/>
            <person name="Plessy C."/>
            <person name="Shibata K."/>
            <person name="Shiraki T."/>
            <person name="Suzuki S."/>
            <person name="Tagami M."/>
            <person name="Waki K."/>
            <person name="Watahiki A."/>
            <person name="Okamura-Oho Y."/>
            <person name="Suzuki H."/>
            <person name="Kawai J."/>
            <person name="Hayashizaki Y."/>
        </authorList>
    </citation>
    <scope>NUCLEOTIDE SEQUENCE [LARGE SCALE MRNA]</scope>
    <source>
        <strain evidence="4">C57BL/6J</strain>
        <tissue evidence="4">Tongue</tissue>
    </source>
</reference>
<reference evidence="3" key="2">
    <citation type="journal article" date="2004" name="Genome Res.">
        <title>The status, quality, and expansion of the NIH full-length cDNA project: the Mammalian Gene Collection (MGC).</title>
        <authorList>
            <consortium name="The MGC Project Team"/>
        </authorList>
    </citation>
    <scope>NUCLEOTIDE SEQUENCE [LARGE SCALE MRNA]</scope>
    <source>
        <tissue>Brain</tissue>
    </source>
</reference>
<evidence type="ECO:0000250" key="1"/>
<evidence type="ECO:0000255" key="2"/>
<evidence type="ECO:0000312" key="3">
    <source>
        <dbReference type="EMBL" id="AAI28284.1"/>
    </source>
</evidence>
<evidence type="ECO:0000312" key="4">
    <source>
        <dbReference type="EMBL" id="BAB26061.1"/>
    </source>
</evidence>
<evidence type="ECO:0000312" key="5">
    <source>
        <dbReference type="MGI" id="MGI:1916783"/>
    </source>
</evidence>
<comment type="function">
    <text evidence="1">In the hair cortex, hair keratin intermediate filaments are embedded in an interfilamentous matrix, consisting of hair keratin-associated proteins (KRTAP), which are essential for the formation of a rigid and resistant hair shaft through their extensive disulfide bond cross-linking with abundant cysteine residues of hair keratins. The matrix proteins include the high-sulfur and high-glycine-tyrosine keratins (By similarity).</text>
</comment>
<comment type="subunit">
    <text evidence="1">Interacts with hair keratins.</text>
</comment>
<comment type="similarity">
    <text evidence="2">Belongs to the PMG family.</text>
</comment>
<dbReference type="EMBL" id="AK009086">
    <property type="protein sequence ID" value="BAB26061.1"/>
    <property type="molecule type" value="mRNA"/>
</dbReference>
<dbReference type="EMBL" id="BC128283">
    <property type="protein sequence ID" value="AAI28284.1"/>
    <property type="molecule type" value="mRNA"/>
</dbReference>
<dbReference type="EMBL" id="BC139410">
    <property type="protein sequence ID" value="AAI39411.1"/>
    <property type="molecule type" value="mRNA"/>
</dbReference>
<dbReference type="EMBL" id="BC139411">
    <property type="protein sequence ID" value="AAI39412.1"/>
    <property type="molecule type" value="mRNA"/>
</dbReference>
<dbReference type="CCDS" id="CCDS28298.1"/>
<dbReference type="RefSeq" id="NP_081381.1">
    <property type="nucleotide sequence ID" value="NM_027105.3"/>
</dbReference>
<dbReference type="STRING" id="10090.ENSMUSP00000093626"/>
<dbReference type="PaxDb" id="10090-ENSMUSP00000093626"/>
<dbReference type="ProteomicsDB" id="265022"/>
<dbReference type="Antibodypedia" id="76496">
    <property type="antibodies" value="29 antibodies from 9 providers"/>
</dbReference>
<dbReference type="Ensembl" id="ENSMUST00000095934.3">
    <property type="protein sequence ID" value="ENSMUSP00000093626.3"/>
    <property type="gene ID" value="ENSMUSG00000071471.3"/>
</dbReference>
<dbReference type="GeneID" id="69533"/>
<dbReference type="KEGG" id="mmu:69533"/>
<dbReference type="UCSC" id="uc007zva.1">
    <property type="organism name" value="mouse"/>
</dbReference>
<dbReference type="AGR" id="MGI:1916783"/>
<dbReference type="CTD" id="388818"/>
<dbReference type="MGI" id="MGI:1916783">
    <property type="gene designation" value="Krtap26-1"/>
</dbReference>
<dbReference type="VEuPathDB" id="HostDB:ENSMUSG00000071471"/>
<dbReference type="eggNOG" id="ENOG502SVJ1">
    <property type="taxonomic scope" value="Eukaryota"/>
</dbReference>
<dbReference type="GeneTree" id="ENSGT00730000111511"/>
<dbReference type="HOGENOM" id="CLU_1312603_0_0_1"/>
<dbReference type="InParanoid" id="Q9D7N2"/>
<dbReference type="OMA" id="SSQDHTW"/>
<dbReference type="OrthoDB" id="9617029at2759"/>
<dbReference type="PhylomeDB" id="Q9D7N2"/>
<dbReference type="TreeFam" id="TF337331"/>
<dbReference type="BioGRID-ORCS" id="69533">
    <property type="hits" value="1 hit in 78 CRISPR screens"/>
</dbReference>
<dbReference type="PRO" id="PR:Q9D7N2"/>
<dbReference type="Proteomes" id="UP000000589">
    <property type="component" value="Chromosome 16"/>
</dbReference>
<dbReference type="RNAct" id="Q9D7N2">
    <property type="molecule type" value="protein"/>
</dbReference>
<dbReference type="Bgee" id="ENSMUSG00000071471">
    <property type="expression patterns" value="Expressed in lip and 10 other cell types or tissues"/>
</dbReference>
<dbReference type="GO" id="GO:0005829">
    <property type="term" value="C:cytosol"/>
    <property type="evidence" value="ECO:0007669"/>
    <property type="project" value="UniProtKB-ARBA"/>
</dbReference>
<dbReference type="GO" id="GO:0045095">
    <property type="term" value="C:keratin filament"/>
    <property type="evidence" value="ECO:0007669"/>
    <property type="project" value="InterPro"/>
</dbReference>
<dbReference type="GO" id="GO:0005198">
    <property type="term" value="F:structural molecule activity"/>
    <property type="evidence" value="ECO:0007669"/>
    <property type="project" value="InterPro"/>
</dbReference>
<dbReference type="InterPro" id="IPR007659">
    <property type="entry name" value="Keratin_matx"/>
</dbReference>
<dbReference type="InterPro" id="IPR007951">
    <property type="entry name" value="KRTAP_PMG"/>
</dbReference>
<dbReference type="PANTHER" id="PTHR23260">
    <property type="entry name" value="KERATIN ASSOCIATED PROTEIN 3-3-RELATED"/>
    <property type="match status" value="1"/>
</dbReference>
<dbReference type="PANTHER" id="PTHR23260:SF7">
    <property type="entry name" value="KERATIN-ASSOCIATED PROTEIN 26-1"/>
    <property type="match status" value="1"/>
</dbReference>
<dbReference type="Pfam" id="PF05287">
    <property type="entry name" value="PMG"/>
    <property type="match status" value="1"/>
</dbReference>
<name>KR261_MOUSE</name>
<feature type="chain" id="PRO_0000358599" description="Keratin-associated protein 26-1">
    <location>
        <begin position="1"/>
        <end position="215"/>
    </location>
</feature>
<gene>
    <name evidence="5" type="primary">Krtap26-1</name>
</gene>
<sequence>MASRNNCSSSGNCSSGSLRNTCHIPASSSIALCSTNMGCGEVFCVPSSCQDHTWFMDNCPETFAEPLSGQPPSREASGFENSCCSSTYCVPRHCQGSGYIPASSFISGSCLPASYRPVSYVSSSCRPVSPFMNNCRPVSCVSGGYRPLPCGSNSCRPLGIVTYGCRPSGCVTYGPQTIHIVSNSLRPLQPVCGGCQPSIPVFGTCRPSCSAQGGQ</sequence>
<protein>
    <recommendedName>
        <fullName evidence="3">Keratin-associated protein 26-1</fullName>
    </recommendedName>
</protein>
<keyword id="KW-0416">Keratin</keyword>
<keyword id="KW-1185">Reference proteome</keyword>
<keyword id="KW-0677">Repeat</keyword>
<accession>Q9D7N2</accession>
<accession>B9EIF2</accession>
<proteinExistence type="evidence at transcript level"/>
<organism>
    <name type="scientific">Mus musculus</name>
    <name type="common">Mouse</name>
    <dbReference type="NCBI Taxonomy" id="10090"/>
    <lineage>
        <taxon>Eukaryota</taxon>
        <taxon>Metazoa</taxon>
        <taxon>Chordata</taxon>
        <taxon>Craniata</taxon>
        <taxon>Vertebrata</taxon>
        <taxon>Euteleostomi</taxon>
        <taxon>Mammalia</taxon>
        <taxon>Eutheria</taxon>
        <taxon>Euarchontoglires</taxon>
        <taxon>Glires</taxon>
        <taxon>Rodentia</taxon>
        <taxon>Myomorpha</taxon>
        <taxon>Muroidea</taxon>
        <taxon>Muridae</taxon>
        <taxon>Murinae</taxon>
        <taxon>Mus</taxon>
        <taxon>Mus</taxon>
    </lineage>
</organism>